<dbReference type="EMBL" id="CP000967">
    <property type="protein sequence ID" value="ACD61655.1"/>
    <property type="molecule type" value="Genomic_DNA"/>
</dbReference>
<dbReference type="RefSeq" id="WP_002805908.1">
    <property type="nucleotide sequence ID" value="NC_010717.2"/>
</dbReference>
<dbReference type="SMR" id="B2SUW2"/>
<dbReference type="GeneID" id="97512525"/>
<dbReference type="KEGG" id="xop:PXO_03485"/>
<dbReference type="eggNOG" id="COG0230">
    <property type="taxonomic scope" value="Bacteria"/>
</dbReference>
<dbReference type="HOGENOM" id="CLU_129938_2_0_6"/>
<dbReference type="Proteomes" id="UP000001740">
    <property type="component" value="Chromosome"/>
</dbReference>
<dbReference type="GO" id="GO:1990904">
    <property type="term" value="C:ribonucleoprotein complex"/>
    <property type="evidence" value="ECO:0007669"/>
    <property type="project" value="UniProtKB-KW"/>
</dbReference>
<dbReference type="GO" id="GO:0005840">
    <property type="term" value="C:ribosome"/>
    <property type="evidence" value="ECO:0007669"/>
    <property type="project" value="UniProtKB-KW"/>
</dbReference>
<dbReference type="GO" id="GO:0003735">
    <property type="term" value="F:structural constituent of ribosome"/>
    <property type="evidence" value="ECO:0007669"/>
    <property type="project" value="InterPro"/>
</dbReference>
<dbReference type="GO" id="GO:0006412">
    <property type="term" value="P:translation"/>
    <property type="evidence" value="ECO:0007669"/>
    <property type="project" value="UniProtKB-UniRule"/>
</dbReference>
<dbReference type="FunFam" id="1.10.287.3980:FF:000001">
    <property type="entry name" value="Mitochondrial ribosomal protein L34"/>
    <property type="match status" value="1"/>
</dbReference>
<dbReference type="Gene3D" id="1.10.287.3980">
    <property type="match status" value="1"/>
</dbReference>
<dbReference type="HAMAP" id="MF_00391">
    <property type="entry name" value="Ribosomal_bL34"/>
    <property type="match status" value="1"/>
</dbReference>
<dbReference type="InterPro" id="IPR000271">
    <property type="entry name" value="Ribosomal_bL34"/>
</dbReference>
<dbReference type="InterPro" id="IPR020939">
    <property type="entry name" value="Ribosomal_bL34_CS"/>
</dbReference>
<dbReference type="NCBIfam" id="TIGR01030">
    <property type="entry name" value="rpmH_bact"/>
    <property type="match status" value="1"/>
</dbReference>
<dbReference type="PANTHER" id="PTHR14503:SF4">
    <property type="entry name" value="LARGE RIBOSOMAL SUBUNIT PROTEIN BL34M"/>
    <property type="match status" value="1"/>
</dbReference>
<dbReference type="PANTHER" id="PTHR14503">
    <property type="entry name" value="MITOCHONDRIAL RIBOSOMAL PROTEIN 34 FAMILY MEMBER"/>
    <property type="match status" value="1"/>
</dbReference>
<dbReference type="Pfam" id="PF00468">
    <property type="entry name" value="Ribosomal_L34"/>
    <property type="match status" value="1"/>
</dbReference>
<dbReference type="PROSITE" id="PS00784">
    <property type="entry name" value="RIBOSOMAL_L34"/>
    <property type="match status" value="1"/>
</dbReference>
<feature type="chain" id="PRO_1000196145" description="Large ribosomal subunit protein bL34">
    <location>
        <begin position="1"/>
        <end position="46"/>
    </location>
</feature>
<feature type="region of interest" description="Disordered" evidence="2">
    <location>
        <begin position="1"/>
        <end position="46"/>
    </location>
</feature>
<feature type="compositionally biased region" description="Polar residues" evidence="2">
    <location>
        <begin position="1"/>
        <end position="11"/>
    </location>
</feature>
<feature type="compositionally biased region" description="Basic residues" evidence="2">
    <location>
        <begin position="32"/>
        <end position="46"/>
    </location>
</feature>
<keyword id="KW-0687">Ribonucleoprotein</keyword>
<keyword id="KW-0689">Ribosomal protein</keyword>
<reference key="1">
    <citation type="journal article" date="2008" name="BMC Genomics">
        <title>Genome sequence and rapid evolution of the rice pathogen Xanthomonas oryzae pv. oryzae PXO99A.</title>
        <authorList>
            <person name="Salzberg S.L."/>
            <person name="Sommer D.D."/>
            <person name="Schatz M.C."/>
            <person name="Phillippy A.M."/>
            <person name="Rabinowicz P.D."/>
            <person name="Tsuge S."/>
            <person name="Furutani A."/>
            <person name="Ochiai H."/>
            <person name="Delcher A.L."/>
            <person name="Kelley D."/>
            <person name="Madupu R."/>
            <person name="Puiu D."/>
            <person name="Radune D."/>
            <person name="Shumway M."/>
            <person name="Trapnell C."/>
            <person name="Aparna G."/>
            <person name="Jha G."/>
            <person name="Pandey A."/>
            <person name="Patil P.B."/>
            <person name="Ishihara H."/>
            <person name="Meyer D.F."/>
            <person name="Szurek B."/>
            <person name="Verdier V."/>
            <person name="Koebnik R."/>
            <person name="Dow J.M."/>
            <person name="Ryan R.P."/>
            <person name="Hirata H."/>
            <person name="Tsuyumu S."/>
            <person name="Won Lee S."/>
            <person name="Seo Y.-S."/>
            <person name="Sriariyanum M."/>
            <person name="Ronald P.C."/>
            <person name="Sonti R.V."/>
            <person name="Van Sluys M.-A."/>
            <person name="Leach J.E."/>
            <person name="White F.F."/>
            <person name="Bogdanove A.J."/>
        </authorList>
    </citation>
    <scope>NUCLEOTIDE SEQUENCE [LARGE SCALE GENOMIC DNA]</scope>
    <source>
        <strain>PXO99A</strain>
    </source>
</reference>
<comment type="similarity">
    <text evidence="1">Belongs to the bacterial ribosomal protein bL34 family.</text>
</comment>
<evidence type="ECO:0000255" key="1">
    <source>
        <dbReference type="HAMAP-Rule" id="MF_00391"/>
    </source>
</evidence>
<evidence type="ECO:0000256" key="2">
    <source>
        <dbReference type="SAM" id="MobiDB-lite"/>
    </source>
</evidence>
<evidence type="ECO:0000305" key="3"/>
<name>RL34_XANOP</name>
<sequence>MATKRTFQPSNLKRARDHGFRARMATADGRKILARRRAKGRKRLSA</sequence>
<accession>B2SUW2</accession>
<gene>
    <name evidence="1" type="primary">rpmH</name>
    <name type="ordered locus">PXO_03485</name>
</gene>
<organism>
    <name type="scientific">Xanthomonas oryzae pv. oryzae (strain PXO99A)</name>
    <dbReference type="NCBI Taxonomy" id="360094"/>
    <lineage>
        <taxon>Bacteria</taxon>
        <taxon>Pseudomonadati</taxon>
        <taxon>Pseudomonadota</taxon>
        <taxon>Gammaproteobacteria</taxon>
        <taxon>Lysobacterales</taxon>
        <taxon>Lysobacteraceae</taxon>
        <taxon>Xanthomonas</taxon>
    </lineage>
</organism>
<protein>
    <recommendedName>
        <fullName evidence="1">Large ribosomal subunit protein bL34</fullName>
    </recommendedName>
    <alternativeName>
        <fullName evidence="3">50S ribosomal protein L34</fullName>
    </alternativeName>
</protein>
<proteinExistence type="inferred from homology"/>